<proteinExistence type="inferred from homology"/>
<feature type="chain" id="PRO_0000330610" description="CCR4-associated factor 4 homolog">
    <location>
        <begin position="1"/>
        <end position="579"/>
    </location>
</feature>
<feature type="repeat" description="WD 1">
    <location>
        <begin position="278"/>
        <end position="320"/>
    </location>
</feature>
<feature type="repeat" description="WD 2">
    <location>
        <begin position="321"/>
        <end position="360"/>
    </location>
</feature>
<feature type="repeat" description="WD 3">
    <location>
        <begin position="373"/>
        <end position="412"/>
    </location>
</feature>
<feature type="repeat" description="WD 4">
    <location>
        <begin position="419"/>
        <end position="472"/>
    </location>
</feature>
<feature type="repeat" description="WD 5">
    <location>
        <begin position="473"/>
        <end position="510"/>
    </location>
</feature>
<feature type="repeat" description="WD 6">
    <location>
        <begin position="512"/>
        <end position="539"/>
    </location>
</feature>
<feature type="repeat" description="WD 7">
    <location>
        <begin position="540"/>
        <end position="578"/>
    </location>
</feature>
<feature type="coiled-coil region" evidence="2">
    <location>
        <begin position="137"/>
        <end position="167"/>
    </location>
</feature>
<name>CAF4_CANGA</name>
<accession>Q6FLI3</accession>
<keyword id="KW-0175">Coiled coil</keyword>
<keyword id="KW-0472">Membrane</keyword>
<keyword id="KW-0496">Mitochondrion</keyword>
<keyword id="KW-1000">Mitochondrion outer membrane</keyword>
<keyword id="KW-1185">Reference proteome</keyword>
<keyword id="KW-0677">Repeat</keyword>
<keyword id="KW-0853">WD repeat</keyword>
<reference key="1">
    <citation type="journal article" date="2004" name="Nature">
        <title>Genome evolution in yeasts.</title>
        <authorList>
            <person name="Dujon B."/>
            <person name="Sherman D."/>
            <person name="Fischer G."/>
            <person name="Durrens P."/>
            <person name="Casaregola S."/>
            <person name="Lafontaine I."/>
            <person name="de Montigny J."/>
            <person name="Marck C."/>
            <person name="Neuveglise C."/>
            <person name="Talla E."/>
            <person name="Goffard N."/>
            <person name="Frangeul L."/>
            <person name="Aigle M."/>
            <person name="Anthouard V."/>
            <person name="Babour A."/>
            <person name="Barbe V."/>
            <person name="Barnay S."/>
            <person name="Blanchin S."/>
            <person name="Beckerich J.-M."/>
            <person name="Beyne E."/>
            <person name="Bleykasten C."/>
            <person name="Boisrame A."/>
            <person name="Boyer J."/>
            <person name="Cattolico L."/>
            <person name="Confanioleri F."/>
            <person name="de Daruvar A."/>
            <person name="Despons L."/>
            <person name="Fabre E."/>
            <person name="Fairhead C."/>
            <person name="Ferry-Dumazet H."/>
            <person name="Groppi A."/>
            <person name="Hantraye F."/>
            <person name="Hennequin C."/>
            <person name="Jauniaux N."/>
            <person name="Joyet P."/>
            <person name="Kachouri R."/>
            <person name="Kerrest A."/>
            <person name="Koszul R."/>
            <person name="Lemaire M."/>
            <person name="Lesur I."/>
            <person name="Ma L."/>
            <person name="Muller H."/>
            <person name="Nicaud J.-M."/>
            <person name="Nikolski M."/>
            <person name="Oztas S."/>
            <person name="Ozier-Kalogeropoulos O."/>
            <person name="Pellenz S."/>
            <person name="Potier S."/>
            <person name="Richard G.-F."/>
            <person name="Straub M.-L."/>
            <person name="Suleau A."/>
            <person name="Swennen D."/>
            <person name="Tekaia F."/>
            <person name="Wesolowski-Louvel M."/>
            <person name="Westhof E."/>
            <person name="Wirth B."/>
            <person name="Zeniou-Meyer M."/>
            <person name="Zivanovic Y."/>
            <person name="Bolotin-Fukuhara M."/>
            <person name="Thierry A."/>
            <person name="Bouchier C."/>
            <person name="Caudron B."/>
            <person name="Scarpelli C."/>
            <person name="Gaillardin C."/>
            <person name="Weissenbach J."/>
            <person name="Wincker P."/>
            <person name="Souciet J.-L."/>
        </authorList>
    </citation>
    <scope>NUCLEOTIDE SEQUENCE [LARGE SCALE GENOMIC DNA]</scope>
    <source>
        <strain>ATCC 2001 / BCRC 20586 / JCM 3761 / NBRC 0622 / NRRL Y-65 / CBS 138</strain>
    </source>
</reference>
<evidence type="ECO:0000250" key="1"/>
<evidence type="ECO:0000255" key="2"/>
<evidence type="ECO:0000305" key="3"/>
<gene>
    <name type="primary">CAF4</name>
    <name type="ordered locus">CAGL0L03201g</name>
</gene>
<protein>
    <recommendedName>
        <fullName>CCR4-associated factor 4 homolog</fullName>
    </recommendedName>
</protein>
<organism>
    <name type="scientific">Candida glabrata (strain ATCC 2001 / BCRC 20586 / JCM 3761 / NBRC 0622 / NRRL Y-65 / CBS 138)</name>
    <name type="common">Yeast</name>
    <name type="synonym">Nakaseomyces glabratus</name>
    <dbReference type="NCBI Taxonomy" id="284593"/>
    <lineage>
        <taxon>Eukaryota</taxon>
        <taxon>Fungi</taxon>
        <taxon>Dikarya</taxon>
        <taxon>Ascomycota</taxon>
        <taxon>Saccharomycotina</taxon>
        <taxon>Saccharomycetes</taxon>
        <taxon>Saccharomycetales</taxon>
        <taxon>Saccharomycetaceae</taxon>
        <taxon>Nakaseomyces</taxon>
    </lineage>
</organism>
<comment type="function">
    <text evidence="1">Involved in mitochondrial fission. Has a partially redundant function to MDV1 in acting as an adapter protein required to form mitochondrial fission complexes. Formation of these complexes is required to promote constriction and fission of the mitochondrial compartment at a late step in mitochondrial division (By similarity).</text>
</comment>
<comment type="subcellular location">
    <subcellularLocation>
        <location evidence="1">Mitochondrion outer membrane</location>
        <topology evidence="1">Peripheral membrane protein</topology>
        <orientation evidence="1">Cytoplasmic side</orientation>
    </subcellularLocation>
</comment>
<comment type="similarity">
    <text evidence="3">Belongs to the WD repeat MDV1/CAF4 family.</text>
</comment>
<dbReference type="EMBL" id="CR380958">
    <property type="protein sequence ID" value="CAG61881.1"/>
    <property type="molecule type" value="Genomic_DNA"/>
</dbReference>
<dbReference type="RefSeq" id="XP_448911.1">
    <property type="nucleotide sequence ID" value="XM_448911.1"/>
</dbReference>
<dbReference type="SMR" id="Q6FLI3"/>
<dbReference type="STRING" id="284593.Q6FLI3"/>
<dbReference type="EnsemblFungi" id="CAGL0L03201g-T">
    <property type="protein sequence ID" value="CAGL0L03201g-T-p1"/>
    <property type="gene ID" value="CAGL0L03201g"/>
</dbReference>
<dbReference type="KEGG" id="cgr:2890850"/>
<dbReference type="CGD" id="CAL0135204">
    <property type="gene designation" value="CAGL0L03201g"/>
</dbReference>
<dbReference type="VEuPathDB" id="FungiDB:CAGL0L03201g"/>
<dbReference type="eggNOG" id="KOG4155">
    <property type="taxonomic scope" value="Eukaryota"/>
</dbReference>
<dbReference type="HOGENOM" id="CLU_470885_0_0_1"/>
<dbReference type="InParanoid" id="Q6FLI3"/>
<dbReference type="Proteomes" id="UP000002428">
    <property type="component" value="Chromosome L"/>
</dbReference>
<dbReference type="GO" id="GO:0005741">
    <property type="term" value="C:mitochondrial outer membrane"/>
    <property type="evidence" value="ECO:0007669"/>
    <property type="project" value="UniProtKB-SubCell"/>
</dbReference>
<dbReference type="GO" id="GO:0005634">
    <property type="term" value="C:nucleus"/>
    <property type="evidence" value="ECO:0007669"/>
    <property type="project" value="TreeGrafter"/>
</dbReference>
<dbReference type="GO" id="GO:1990234">
    <property type="term" value="C:transferase complex"/>
    <property type="evidence" value="ECO:0007669"/>
    <property type="project" value="UniProtKB-ARBA"/>
</dbReference>
<dbReference type="CDD" id="cd00200">
    <property type="entry name" value="WD40"/>
    <property type="match status" value="1"/>
</dbReference>
<dbReference type="Gene3D" id="2.130.10.10">
    <property type="entry name" value="YVTN repeat-like/Quinoprotein amine dehydrogenase"/>
    <property type="match status" value="2"/>
</dbReference>
<dbReference type="InterPro" id="IPR020472">
    <property type="entry name" value="G-protein_beta_WD-40_rep"/>
</dbReference>
<dbReference type="InterPro" id="IPR015943">
    <property type="entry name" value="WD40/YVTN_repeat-like_dom_sf"/>
</dbReference>
<dbReference type="InterPro" id="IPR019775">
    <property type="entry name" value="WD40_repeat_CS"/>
</dbReference>
<dbReference type="InterPro" id="IPR036322">
    <property type="entry name" value="WD40_repeat_dom_sf"/>
</dbReference>
<dbReference type="InterPro" id="IPR001680">
    <property type="entry name" value="WD40_rpt"/>
</dbReference>
<dbReference type="PANTHER" id="PTHR22847:SF637">
    <property type="entry name" value="WD REPEAT DOMAIN 5B"/>
    <property type="match status" value="1"/>
</dbReference>
<dbReference type="PANTHER" id="PTHR22847">
    <property type="entry name" value="WD40 REPEAT PROTEIN"/>
    <property type="match status" value="1"/>
</dbReference>
<dbReference type="Pfam" id="PF00400">
    <property type="entry name" value="WD40"/>
    <property type="match status" value="4"/>
</dbReference>
<dbReference type="PRINTS" id="PR00320">
    <property type="entry name" value="GPROTEINBRPT"/>
</dbReference>
<dbReference type="SMART" id="SM00320">
    <property type="entry name" value="WD40"/>
    <property type="match status" value="5"/>
</dbReference>
<dbReference type="SUPFAM" id="SSF50978">
    <property type="entry name" value="WD40 repeat-like"/>
    <property type="match status" value="1"/>
</dbReference>
<dbReference type="PROSITE" id="PS00678">
    <property type="entry name" value="WD_REPEATS_1"/>
    <property type="match status" value="4"/>
</dbReference>
<dbReference type="PROSITE" id="PS50082">
    <property type="entry name" value="WD_REPEATS_2"/>
    <property type="match status" value="5"/>
</dbReference>
<dbReference type="PROSITE" id="PS50294">
    <property type="entry name" value="WD_REPEATS_REGION"/>
    <property type="match status" value="1"/>
</dbReference>
<sequence>MVNIVEKQNRLSLISLSLVSIRYKSWDFLYRILHGSIFDYIIGPRKELLLYFKCVYDSTFFNGKNYFSNLFTDTATSFRLLTFLNEHDLKSIPPLPLDKCQGLDSYSTLYDGYIVQSSHESQGLYDGSGKDGNDYTMKMQIMKNVLEMQINEMDDEIKRIKLRRNVVAKKLDVIISRIVDHKENKSKTDGSTEDEVHIGNTSSVLKQTNHEHTIITSENNTDDKVSLLTLEPDNAQIGNKLQRYFEAMKLKKKSSGFDIEDFENIIGTKGQLGKTLKCHDDYINSLAINAQLGVLSSTANLDNEIKLWDISTTQCLGVLSGHRATVNTTRFIDDTRLLASAGKDASVKVWDVDNIVDKDGNANDNLCLATFDGHKDSVTALATTGNAIVSGSNDKTLRHWDLGSGKCIQSIDLTIALKMVPQSVSKLDITPSFNTPLIGGADCIDNALVTGTKDGIVYLWDLRIGRVVGSLEGHRGPITSLKYMGSELITGSMDKSTRIWDLRMGSVAELLSFEKEVVSVEESQTQLINALEGEPVKIYDRGERQYNSLPDSFNTTTLVVYESLLALGNDHGDITWWSL</sequence>